<reference key="1">
    <citation type="submission" date="2007-04" db="EMBL/GenBank/DDBJ databases">
        <title>Complete sequence of Pseudomonas mendocina ymp.</title>
        <authorList>
            <consortium name="US DOE Joint Genome Institute"/>
            <person name="Copeland A."/>
            <person name="Lucas S."/>
            <person name="Lapidus A."/>
            <person name="Barry K."/>
            <person name="Glavina del Rio T."/>
            <person name="Dalin E."/>
            <person name="Tice H."/>
            <person name="Pitluck S."/>
            <person name="Kiss H."/>
            <person name="Brettin T."/>
            <person name="Detter J.C."/>
            <person name="Bruce D."/>
            <person name="Han C."/>
            <person name="Schmutz J."/>
            <person name="Larimer F."/>
            <person name="Land M."/>
            <person name="Hauser L."/>
            <person name="Kyrpides N."/>
            <person name="Mikhailova N."/>
            <person name="Hersman L."/>
            <person name="Dubois J."/>
            <person name="Maurice P."/>
            <person name="Richardson P."/>
        </authorList>
    </citation>
    <scope>NUCLEOTIDE SEQUENCE [LARGE SCALE GENOMIC DNA]</scope>
    <source>
        <strain>ymp</strain>
    </source>
</reference>
<organism>
    <name type="scientific">Ectopseudomonas mendocina (strain ymp)</name>
    <name type="common">Pseudomonas mendocina</name>
    <dbReference type="NCBI Taxonomy" id="399739"/>
    <lineage>
        <taxon>Bacteria</taxon>
        <taxon>Pseudomonadati</taxon>
        <taxon>Pseudomonadota</taxon>
        <taxon>Gammaproteobacteria</taxon>
        <taxon>Pseudomonadales</taxon>
        <taxon>Pseudomonadaceae</taxon>
        <taxon>Ectopseudomonas</taxon>
    </lineage>
</organism>
<feature type="chain" id="PRO_0000336231" description="UPF0102 protein Pmen_0910">
    <location>
        <begin position="1"/>
        <end position="119"/>
    </location>
</feature>
<gene>
    <name type="ordered locus">Pmen_0910</name>
</gene>
<dbReference type="EMBL" id="CP000680">
    <property type="protein sequence ID" value="ABP83678.1"/>
    <property type="molecule type" value="Genomic_DNA"/>
</dbReference>
<dbReference type="SMR" id="A4XQR2"/>
<dbReference type="STRING" id="399739.Pmen_0910"/>
<dbReference type="KEGG" id="pmy:Pmen_0910"/>
<dbReference type="PATRIC" id="fig|399739.8.peg.919"/>
<dbReference type="eggNOG" id="COG0792">
    <property type="taxonomic scope" value="Bacteria"/>
</dbReference>
<dbReference type="HOGENOM" id="CLU_115353_1_0_6"/>
<dbReference type="OrthoDB" id="9794876at2"/>
<dbReference type="GO" id="GO:0003676">
    <property type="term" value="F:nucleic acid binding"/>
    <property type="evidence" value="ECO:0007669"/>
    <property type="project" value="InterPro"/>
</dbReference>
<dbReference type="CDD" id="cd20736">
    <property type="entry name" value="PoNe_Nuclease"/>
    <property type="match status" value="1"/>
</dbReference>
<dbReference type="Gene3D" id="3.40.1350.10">
    <property type="match status" value="1"/>
</dbReference>
<dbReference type="HAMAP" id="MF_00048">
    <property type="entry name" value="UPF0102"/>
    <property type="match status" value="1"/>
</dbReference>
<dbReference type="InterPro" id="IPR011335">
    <property type="entry name" value="Restrct_endonuc-II-like"/>
</dbReference>
<dbReference type="InterPro" id="IPR011856">
    <property type="entry name" value="tRNA_endonuc-like_dom_sf"/>
</dbReference>
<dbReference type="InterPro" id="IPR003509">
    <property type="entry name" value="UPF0102_YraN-like"/>
</dbReference>
<dbReference type="NCBIfam" id="NF009150">
    <property type="entry name" value="PRK12497.1-3"/>
    <property type="match status" value="1"/>
</dbReference>
<dbReference type="NCBIfam" id="TIGR00252">
    <property type="entry name" value="YraN family protein"/>
    <property type="match status" value="1"/>
</dbReference>
<dbReference type="PANTHER" id="PTHR34039">
    <property type="entry name" value="UPF0102 PROTEIN YRAN"/>
    <property type="match status" value="1"/>
</dbReference>
<dbReference type="PANTHER" id="PTHR34039:SF1">
    <property type="entry name" value="UPF0102 PROTEIN YRAN"/>
    <property type="match status" value="1"/>
</dbReference>
<dbReference type="Pfam" id="PF02021">
    <property type="entry name" value="UPF0102"/>
    <property type="match status" value="1"/>
</dbReference>
<dbReference type="SUPFAM" id="SSF52980">
    <property type="entry name" value="Restriction endonuclease-like"/>
    <property type="match status" value="1"/>
</dbReference>
<evidence type="ECO:0000255" key="1">
    <source>
        <dbReference type="HAMAP-Rule" id="MF_00048"/>
    </source>
</evidence>
<accession>A4XQR2</accession>
<name>Y910_ECTM1</name>
<sequence>MSSHNDLGRASELAARQHLERNGLRLIQQNWSCRRGELDLVMLDGDTVVFVEVRARRHSAWGGALESVDARKRGKLVMAAELFLQQNSRWARHPCRFDVVAISTEGATRLDWIKNAFDA</sequence>
<comment type="similarity">
    <text evidence="1">Belongs to the UPF0102 family.</text>
</comment>
<protein>
    <recommendedName>
        <fullName evidence="1">UPF0102 protein Pmen_0910</fullName>
    </recommendedName>
</protein>
<proteinExistence type="inferred from homology"/>